<gene>
    <name evidence="1" type="primary">rplA</name>
    <name type="ordered locus">CPE2416</name>
</gene>
<protein>
    <recommendedName>
        <fullName evidence="1">Large ribosomal subunit protein uL1</fullName>
    </recommendedName>
    <alternativeName>
        <fullName evidence="2">50S ribosomal protein L1</fullName>
    </alternativeName>
</protein>
<keyword id="KW-1185">Reference proteome</keyword>
<keyword id="KW-0678">Repressor</keyword>
<keyword id="KW-0687">Ribonucleoprotein</keyword>
<keyword id="KW-0689">Ribosomal protein</keyword>
<keyword id="KW-0694">RNA-binding</keyword>
<keyword id="KW-0699">rRNA-binding</keyword>
<keyword id="KW-0810">Translation regulation</keyword>
<keyword id="KW-0820">tRNA-binding</keyword>
<organism>
    <name type="scientific">Clostridium perfringens (strain 13 / Type A)</name>
    <dbReference type="NCBI Taxonomy" id="195102"/>
    <lineage>
        <taxon>Bacteria</taxon>
        <taxon>Bacillati</taxon>
        <taxon>Bacillota</taxon>
        <taxon>Clostridia</taxon>
        <taxon>Eubacteriales</taxon>
        <taxon>Clostridiaceae</taxon>
        <taxon>Clostridium</taxon>
    </lineage>
</organism>
<feature type="chain" id="PRO_0000125645" description="Large ribosomal subunit protein uL1">
    <location>
        <begin position="1"/>
        <end position="229"/>
    </location>
</feature>
<reference key="1">
    <citation type="journal article" date="2002" name="Proc. Natl. Acad. Sci. U.S.A.">
        <title>Complete genome sequence of Clostridium perfringens, an anaerobic flesh-eater.</title>
        <authorList>
            <person name="Shimizu T."/>
            <person name="Ohtani K."/>
            <person name="Hirakawa H."/>
            <person name="Ohshima K."/>
            <person name="Yamashita A."/>
            <person name="Shiba T."/>
            <person name="Ogasawara N."/>
            <person name="Hattori M."/>
            <person name="Kuhara S."/>
            <person name="Hayashi H."/>
        </authorList>
    </citation>
    <scope>NUCLEOTIDE SEQUENCE [LARGE SCALE GENOMIC DNA]</scope>
    <source>
        <strain>13 / Type A</strain>
    </source>
</reference>
<accession>Q8XHR5</accession>
<proteinExistence type="inferred from homology"/>
<evidence type="ECO:0000255" key="1">
    <source>
        <dbReference type="HAMAP-Rule" id="MF_01318"/>
    </source>
</evidence>
<evidence type="ECO:0000305" key="2"/>
<comment type="function">
    <text evidence="1">Binds directly to 23S rRNA. The L1 stalk is quite mobile in the ribosome, and is involved in E site tRNA release.</text>
</comment>
<comment type="function">
    <text evidence="1">Protein L1 is also a translational repressor protein, it controls the translation of the L11 operon by binding to its mRNA.</text>
</comment>
<comment type="subunit">
    <text evidence="1">Part of the 50S ribosomal subunit.</text>
</comment>
<comment type="similarity">
    <text evidence="1">Belongs to the universal ribosomal protein uL1 family.</text>
</comment>
<dbReference type="EMBL" id="BA000016">
    <property type="protein sequence ID" value="BAB82122.1"/>
    <property type="molecule type" value="Genomic_DNA"/>
</dbReference>
<dbReference type="RefSeq" id="WP_003452172.1">
    <property type="nucleotide sequence ID" value="NC_003366.1"/>
</dbReference>
<dbReference type="SMR" id="Q8XHR5"/>
<dbReference type="STRING" id="195102.gene:10491733"/>
<dbReference type="GeneID" id="93000998"/>
<dbReference type="KEGG" id="cpe:CPE2416"/>
<dbReference type="HOGENOM" id="CLU_062853_0_0_9"/>
<dbReference type="Proteomes" id="UP000000818">
    <property type="component" value="Chromosome"/>
</dbReference>
<dbReference type="GO" id="GO:0015934">
    <property type="term" value="C:large ribosomal subunit"/>
    <property type="evidence" value="ECO:0007669"/>
    <property type="project" value="InterPro"/>
</dbReference>
<dbReference type="GO" id="GO:0019843">
    <property type="term" value="F:rRNA binding"/>
    <property type="evidence" value="ECO:0007669"/>
    <property type="project" value="UniProtKB-UniRule"/>
</dbReference>
<dbReference type="GO" id="GO:0003735">
    <property type="term" value="F:structural constituent of ribosome"/>
    <property type="evidence" value="ECO:0007669"/>
    <property type="project" value="InterPro"/>
</dbReference>
<dbReference type="GO" id="GO:0000049">
    <property type="term" value="F:tRNA binding"/>
    <property type="evidence" value="ECO:0007669"/>
    <property type="project" value="UniProtKB-KW"/>
</dbReference>
<dbReference type="GO" id="GO:0006417">
    <property type="term" value="P:regulation of translation"/>
    <property type="evidence" value="ECO:0007669"/>
    <property type="project" value="UniProtKB-KW"/>
</dbReference>
<dbReference type="GO" id="GO:0006412">
    <property type="term" value="P:translation"/>
    <property type="evidence" value="ECO:0007669"/>
    <property type="project" value="UniProtKB-UniRule"/>
</dbReference>
<dbReference type="CDD" id="cd00403">
    <property type="entry name" value="Ribosomal_L1"/>
    <property type="match status" value="1"/>
</dbReference>
<dbReference type="FunFam" id="3.40.50.790:FF:000001">
    <property type="entry name" value="50S ribosomal protein L1"/>
    <property type="match status" value="1"/>
</dbReference>
<dbReference type="Gene3D" id="3.30.190.20">
    <property type="match status" value="1"/>
</dbReference>
<dbReference type="Gene3D" id="3.40.50.790">
    <property type="match status" value="1"/>
</dbReference>
<dbReference type="HAMAP" id="MF_01318_B">
    <property type="entry name" value="Ribosomal_uL1_B"/>
    <property type="match status" value="1"/>
</dbReference>
<dbReference type="InterPro" id="IPR005878">
    <property type="entry name" value="Ribosom_uL1_bac-type"/>
</dbReference>
<dbReference type="InterPro" id="IPR002143">
    <property type="entry name" value="Ribosomal_uL1"/>
</dbReference>
<dbReference type="InterPro" id="IPR023674">
    <property type="entry name" value="Ribosomal_uL1-like"/>
</dbReference>
<dbReference type="InterPro" id="IPR028364">
    <property type="entry name" value="Ribosomal_uL1/biogenesis"/>
</dbReference>
<dbReference type="InterPro" id="IPR016095">
    <property type="entry name" value="Ribosomal_uL1_3-a/b-sand"/>
</dbReference>
<dbReference type="InterPro" id="IPR023673">
    <property type="entry name" value="Ribosomal_uL1_CS"/>
</dbReference>
<dbReference type="NCBIfam" id="TIGR01169">
    <property type="entry name" value="rplA_bact"/>
    <property type="match status" value="1"/>
</dbReference>
<dbReference type="PANTHER" id="PTHR36427">
    <property type="entry name" value="54S RIBOSOMAL PROTEIN L1, MITOCHONDRIAL"/>
    <property type="match status" value="1"/>
</dbReference>
<dbReference type="PANTHER" id="PTHR36427:SF3">
    <property type="entry name" value="LARGE RIBOSOMAL SUBUNIT PROTEIN UL1M"/>
    <property type="match status" value="1"/>
</dbReference>
<dbReference type="Pfam" id="PF00687">
    <property type="entry name" value="Ribosomal_L1"/>
    <property type="match status" value="1"/>
</dbReference>
<dbReference type="PIRSF" id="PIRSF002155">
    <property type="entry name" value="Ribosomal_L1"/>
    <property type="match status" value="1"/>
</dbReference>
<dbReference type="SUPFAM" id="SSF56808">
    <property type="entry name" value="Ribosomal protein L1"/>
    <property type="match status" value="1"/>
</dbReference>
<dbReference type="PROSITE" id="PS01199">
    <property type="entry name" value="RIBOSOMAL_L1"/>
    <property type="match status" value="1"/>
</dbReference>
<sequence length="229" mass="24440">MGKKYIESSKLIDKNALYTPAEALELAVKTAKAKFDETIELHVRLGVDPRHADQQVRGAVVLPHGTGKDVKVLVFAKGEKAKEAEAAGADFVGADELVQKIQGENWFDYDVVVATPDMMGVVGRLGRVLGPKGLMPNPKSGTVTFDVANAIKEIKAGKVEYRVDKTAIVHCPIGKKSFGTEKLVENFKALMDALVKAKPAAAKGQYLKSVSVSATMGPGAKVNPAKVLD</sequence>
<name>RL1_CLOPE</name>